<sequence>MRWPVPPLGYLLLGGQGLLLTFSLISSQNNTSPVTYPDINVSAAPEPRDPLGPLVLCSYLPEEFVECDDPVDHMGNGTAQQELRYGCKKFGGQAYGDVEHTQVMCRALDGIECDGSRSFLRGNRPCIKYTGHYFITTLLYSFFLGCFGVDRFCLGHTGTAVGKLLTWGGLGIWWFVDLILLITGGLMPSDNSNWCTIY</sequence>
<proteinExistence type="evidence at transcript level"/>
<name>TM2D2_XENLA</name>
<evidence type="ECO:0000255" key="1"/>
<evidence type="ECO:0000255" key="2">
    <source>
        <dbReference type="PROSITE-ProRule" id="PRU00498"/>
    </source>
</evidence>
<evidence type="ECO:0000305" key="3"/>
<keyword id="KW-0325">Glycoprotein</keyword>
<keyword id="KW-0472">Membrane</keyword>
<keyword id="KW-1185">Reference proteome</keyword>
<keyword id="KW-0732">Signal</keyword>
<keyword id="KW-0812">Transmembrane</keyword>
<keyword id="KW-1133">Transmembrane helix</keyword>
<protein>
    <recommendedName>
        <fullName>TM2 domain-containing protein 2</fullName>
    </recommendedName>
</protein>
<feature type="signal peptide" evidence="1">
    <location>
        <begin position="1"/>
        <end position="27"/>
    </location>
</feature>
<feature type="chain" id="PRO_0000298987" description="TM2 domain-containing protein 2">
    <location>
        <begin position="28"/>
        <end position="198"/>
    </location>
</feature>
<feature type="topological domain" description="Extracellular" evidence="3">
    <location>
        <begin position="28"/>
        <end position="128"/>
    </location>
</feature>
<feature type="transmembrane region" description="Helical" evidence="1">
    <location>
        <begin position="129"/>
        <end position="149"/>
    </location>
</feature>
<feature type="topological domain" description="Cytoplasmic" evidence="3">
    <location>
        <begin position="150"/>
        <end position="166"/>
    </location>
</feature>
<feature type="transmembrane region" description="Helical" evidence="1">
    <location>
        <begin position="167"/>
        <end position="187"/>
    </location>
</feature>
<feature type="topological domain" description="Extracellular" evidence="3">
    <location>
        <begin position="188"/>
        <end position="198"/>
    </location>
</feature>
<feature type="domain" description="TM2" evidence="1">
    <location>
        <begin position="131"/>
        <end position="179"/>
    </location>
</feature>
<feature type="glycosylation site" description="N-linked (GlcNAc...) asparagine" evidence="2">
    <location>
        <position position="29"/>
    </location>
</feature>
<feature type="glycosylation site" description="N-linked (GlcNAc...) asparagine" evidence="2">
    <location>
        <position position="40"/>
    </location>
</feature>
<feature type="glycosylation site" description="N-linked (GlcNAc...) asparagine" evidence="2">
    <location>
        <position position="76"/>
    </location>
</feature>
<accession>Q5XGR4</accession>
<organism>
    <name type="scientific">Xenopus laevis</name>
    <name type="common">African clawed frog</name>
    <dbReference type="NCBI Taxonomy" id="8355"/>
    <lineage>
        <taxon>Eukaryota</taxon>
        <taxon>Metazoa</taxon>
        <taxon>Chordata</taxon>
        <taxon>Craniata</taxon>
        <taxon>Vertebrata</taxon>
        <taxon>Euteleostomi</taxon>
        <taxon>Amphibia</taxon>
        <taxon>Batrachia</taxon>
        <taxon>Anura</taxon>
        <taxon>Pipoidea</taxon>
        <taxon>Pipidae</taxon>
        <taxon>Xenopodinae</taxon>
        <taxon>Xenopus</taxon>
        <taxon>Xenopus</taxon>
    </lineage>
</organism>
<dbReference type="EMBL" id="BC084368">
    <property type="protein sequence ID" value="AAH84368.1"/>
    <property type="molecule type" value="mRNA"/>
</dbReference>
<dbReference type="RefSeq" id="NP_001088322.1">
    <property type="nucleotide sequence ID" value="NM_001094853.1"/>
</dbReference>
<dbReference type="SMR" id="Q5XGR4"/>
<dbReference type="GlyCosmos" id="Q5XGR4">
    <property type="glycosylation" value="3 sites, No reported glycans"/>
</dbReference>
<dbReference type="GeneID" id="495160"/>
<dbReference type="KEGG" id="xla:495160"/>
<dbReference type="AGR" id="Xenbase:XB-GENE-6078194"/>
<dbReference type="CTD" id="495160"/>
<dbReference type="Xenbase" id="XB-GENE-6078194">
    <property type="gene designation" value="tm2d2.L"/>
</dbReference>
<dbReference type="OrthoDB" id="408511at2759"/>
<dbReference type="Proteomes" id="UP000186698">
    <property type="component" value="Chromosome 3L"/>
</dbReference>
<dbReference type="Bgee" id="495160">
    <property type="expression patterns" value="Expressed in oocyte and 19 other cell types or tissues"/>
</dbReference>
<dbReference type="GO" id="GO:0016020">
    <property type="term" value="C:membrane"/>
    <property type="evidence" value="ECO:0007669"/>
    <property type="project" value="UniProtKB-SubCell"/>
</dbReference>
<dbReference type="InterPro" id="IPR007829">
    <property type="entry name" value="TM2"/>
</dbReference>
<dbReference type="InterPro" id="IPR050932">
    <property type="entry name" value="TM2D1-3-like"/>
</dbReference>
<dbReference type="PANTHER" id="PTHR21016">
    <property type="entry name" value="BETA-AMYLOID BINDING PROTEIN-RELATED"/>
    <property type="match status" value="1"/>
</dbReference>
<dbReference type="PANTHER" id="PTHR21016:SF4">
    <property type="entry name" value="TM2 DOMAIN-CONTAINING PROTEIN 2"/>
    <property type="match status" value="1"/>
</dbReference>
<dbReference type="Pfam" id="PF05154">
    <property type="entry name" value="TM2"/>
    <property type="match status" value="1"/>
</dbReference>
<gene>
    <name type="primary">tm2d2</name>
</gene>
<reference key="1">
    <citation type="submission" date="2004-10" db="EMBL/GenBank/DDBJ databases">
        <authorList>
            <consortium name="NIH - Xenopus Gene Collection (XGC) project"/>
        </authorList>
    </citation>
    <scope>NUCLEOTIDE SEQUENCE [LARGE SCALE MRNA]</scope>
</reference>
<comment type="subcellular location">
    <subcellularLocation>
        <location evidence="3">Membrane</location>
        <topology evidence="3">Multi-pass membrane protein</topology>
    </subcellularLocation>
</comment>
<comment type="similarity">
    <text evidence="3">Belongs to the TM2 family.</text>
</comment>